<sequence>MYAIVKTGGKQYKVAEGDLVKVEKIEGEPGASVALTPVLLVDGADVTTAADKLASVSVNTEIVEHTKGPKIKILKYKNKTGYKKRQGHRQPLTVLKVTGIK</sequence>
<organism>
    <name type="scientific">Corynebacterium glutamicum (strain R)</name>
    <dbReference type="NCBI Taxonomy" id="340322"/>
    <lineage>
        <taxon>Bacteria</taxon>
        <taxon>Bacillati</taxon>
        <taxon>Actinomycetota</taxon>
        <taxon>Actinomycetes</taxon>
        <taxon>Mycobacteriales</taxon>
        <taxon>Corynebacteriaceae</taxon>
        <taxon>Corynebacterium</taxon>
    </lineage>
</organism>
<keyword id="KW-0687">Ribonucleoprotein</keyword>
<keyword id="KW-0689">Ribosomal protein</keyword>
<keyword id="KW-0694">RNA-binding</keyword>
<keyword id="KW-0699">rRNA-binding</keyword>
<accession>A4QG85</accession>
<protein>
    <recommendedName>
        <fullName evidence="1">Large ribosomal subunit protein bL21</fullName>
    </recommendedName>
    <alternativeName>
        <fullName evidence="2">50S ribosomal protein L21</fullName>
    </alternativeName>
</protein>
<proteinExistence type="inferred from homology"/>
<gene>
    <name evidence="1" type="primary">rplU</name>
    <name type="ordered locus">cgR_2247</name>
</gene>
<comment type="function">
    <text evidence="1">This protein binds to 23S rRNA in the presence of protein L20.</text>
</comment>
<comment type="subunit">
    <text evidence="1">Part of the 50S ribosomal subunit. Contacts protein L20.</text>
</comment>
<comment type="similarity">
    <text evidence="1">Belongs to the bacterial ribosomal protein bL21 family.</text>
</comment>
<evidence type="ECO:0000255" key="1">
    <source>
        <dbReference type="HAMAP-Rule" id="MF_01363"/>
    </source>
</evidence>
<evidence type="ECO:0000305" key="2"/>
<feature type="chain" id="PRO_1000067828" description="Large ribosomal subunit protein bL21">
    <location>
        <begin position="1"/>
        <end position="101"/>
    </location>
</feature>
<name>RL21_CORGB</name>
<dbReference type="EMBL" id="AP009044">
    <property type="protein sequence ID" value="BAF55251.1"/>
    <property type="molecule type" value="Genomic_DNA"/>
</dbReference>
<dbReference type="RefSeq" id="WP_003859302.1">
    <property type="nucleotide sequence ID" value="NC_009342.1"/>
</dbReference>
<dbReference type="SMR" id="A4QG85"/>
<dbReference type="GeneID" id="1020313"/>
<dbReference type="KEGG" id="cgt:cgR_2247"/>
<dbReference type="HOGENOM" id="CLU_061463_3_0_11"/>
<dbReference type="PhylomeDB" id="A4QG85"/>
<dbReference type="Proteomes" id="UP000006698">
    <property type="component" value="Chromosome"/>
</dbReference>
<dbReference type="GO" id="GO:0005737">
    <property type="term" value="C:cytoplasm"/>
    <property type="evidence" value="ECO:0007669"/>
    <property type="project" value="UniProtKB-ARBA"/>
</dbReference>
<dbReference type="GO" id="GO:1990904">
    <property type="term" value="C:ribonucleoprotein complex"/>
    <property type="evidence" value="ECO:0007669"/>
    <property type="project" value="UniProtKB-KW"/>
</dbReference>
<dbReference type="GO" id="GO:0005840">
    <property type="term" value="C:ribosome"/>
    <property type="evidence" value="ECO:0007669"/>
    <property type="project" value="UniProtKB-KW"/>
</dbReference>
<dbReference type="GO" id="GO:0019843">
    <property type="term" value="F:rRNA binding"/>
    <property type="evidence" value="ECO:0007669"/>
    <property type="project" value="UniProtKB-UniRule"/>
</dbReference>
<dbReference type="GO" id="GO:0003735">
    <property type="term" value="F:structural constituent of ribosome"/>
    <property type="evidence" value="ECO:0007669"/>
    <property type="project" value="InterPro"/>
</dbReference>
<dbReference type="GO" id="GO:0006412">
    <property type="term" value="P:translation"/>
    <property type="evidence" value="ECO:0007669"/>
    <property type="project" value="UniProtKB-UniRule"/>
</dbReference>
<dbReference type="HAMAP" id="MF_01363">
    <property type="entry name" value="Ribosomal_bL21"/>
    <property type="match status" value="1"/>
</dbReference>
<dbReference type="InterPro" id="IPR028909">
    <property type="entry name" value="bL21-like"/>
</dbReference>
<dbReference type="InterPro" id="IPR036164">
    <property type="entry name" value="bL21-like_sf"/>
</dbReference>
<dbReference type="InterPro" id="IPR001787">
    <property type="entry name" value="Ribosomal_bL21"/>
</dbReference>
<dbReference type="InterPro" id="IPR018258">
    <property type="entry name" value="Ribosomal_bL21_CS"/>
</dbReference>
<dbReference type="NCBIfam" id="TIGR00061">
    <property type="entry name" value="L21"/>
    <property type="match status" value="1"/>
</dbReference>
<dbReference type="PANTHER" id="PTHR21349">
    <property type="entry name" value="50S RIBOSOMAL PROTEIN L21"/>
    <property type="match status" value="1"/>
</dbReference>
<dbReference type="PANTHER" id="PTHR21349:SF0">
    <property type="entry name" value="LARGE RIBOSOMAL SUBUNIT PROTEIN BL21M"/>
    <property type="match status" value="1"/>
</dbReference>
<dbReference type="Pfam" id="PF00829">
    <property type="entry name" value="Ribosomal_L21p"/>
    <property type="match status" value="1"/>
</dbReference>
<dbReference type="SUPFAM" id="SSF141091">
    <property type="entry name" value="L21p-like"/>
    <property type="match status" value="1"/>
</dbReference>
<dbReference type="PROSITE" id="PS01169">
    <property type="entry name" value="RIBOSOMAL_L21"/>
    <property type="match status" value="1"/>
</dbReference>
<reference key="1">
    <citation type="journal article" date="2007" name="Microbiology">
        <title>Comparative analysis of the Corynebacterium glutamicum group and complete genome sequence of strain R.</title>
        <authorList>
            <person name="Yukawa H."/>
            <person name="Omumasaba C.A."/>
            <person name="Nonaka H."/>
            <person name="Kos P."/>
            <person name="Okai N."/>
            <person name="Suzuki N."/>
            <person name="Suda M."/>
            <person name="Tsuge Y."/>
            <person name="Watanabe J."/>
            <person name="Ikeda Y."/>
            <person name="Vertes A.A."/>
            <person name="Inui M."/>
        </authorList>
    </citation>
    <scope>NUCLEOTIDE SEQUENCE [LARGE SCALE GENOMIC DNA]</scope>
    <source>
        <strain>R</strain>
    </source>
</reference>